<proteinExistence type="inferred from homology"/>
<evidence type="ECO:0000255" key="1"/>
<evidence type="ECO:0000255" key="2">
    <source>
        <dbReference type="PROSITE-ProRule" id="PRU00107"/>
    </source>
</evidence>
<evidence type="ECO:0000255" key="3">
    <source>
        <dbReference type="PROSITE-ProRule" id="PRU00141"/>
    </source>
</evidence>
<evidence type="ECO:0000256" key="4">
    <source>
        <dbReference type="SAM" id="MobiDB-lite"/>
    </source>
</evidence>
<evidence type="ECO:0000305" key="5"/>
<dbReference type="EC" id="2.7.13.3"/>
<dbReference type="EMBL" id="AL591688">
    <property type="protein sequence ID" value="CAC45574.1"/>
    <property type="molecule type" value="Genomic_DNA"/>
</dbReference>
<dbReference type="EMBL" id="L37353">
    <property type="protein sequence ID" value="AAA74242.1"/>
    <property type="molecule type" value="Genomic_DNA"/>
</dbReference>
<dbReference type="RefSeq" id="NP_385108.1">
    <property type="nucleotide sequence ID" value="NC_003047.1"/>
</dbReference>
<dbReference type="RefSeq" id="WP_010968980.1">
    <property type="nucleotide sequence ID" value="NC_003047.1"/>
</dbReference>
<dbReference type="SMR" id="Q52969"/>
<dbReference type="EnsemblBacteria" id="CAC45574">
    <property type="protein sequence ID" value="CAC45574"/>
    <property type="gene ID" value="SMc00059"/>
</dbReference>
<dbReference type="KEGG" id="sme:SMc00059"/>
<dbReference type="PATRIC" id="fig|266834.11.peg.2403"/>
<dbReference type="eggNOG" id="COG2205">
    <property type="taxonomic scope" value="Bacteria"/>
</dbReference>
<dbReference type="HOGENOM" id="CLU_000445_89_22_5"/>
<dbReference type="OrthoDB" id="9801651at2"/>
<dbReference type="Proteomes" id="UP000001976">
    <property type="component" value="Chromosome"/>
</dbReference>
<dbReference type="GO" id="GO:0005886">
    <property type="term" value="C:plasma membrane"/>
    <property type="evidence" value="ECO:0007669"/>
    <property type="project" value="UniProtKB-SubCell"/>
</dbReference>
<dbReference type="GO" id="GO:0005524">
    <property type="term" value="F:ATP binding"/>
    <property type="evidence" value="ECO:0007669"/>
    <property type="project" value="UniProtKB-KW"/>
</dbReference>
<dbReference type="GO" id="GO:0000155">
    <property type="term" value="F:phosphorelay sensor kinase activity"/>
    <property type="evidence" value="ECO:0007669"/>
    <property type="project" value="InterPro"/>
</dbReference>
<dbReference type="CDD" id="cd16922">
    <property type="entry name" value="HATPase_EvgS-ArcB-TorS-like"/>
    <property type="match status" value="1"/>
</dbReference>
<dbReference type="CDD" id="cd00082">
    <property type="entry name" value="HisKA"/>
    <property type="match status" value="1"/>
</dbReference>
<dbReference type="FunFam" id="3.30.565.10:FF:000010">
    <property type="entry name" value="Sensor histidine kinase RcsC"/>
    <property type="match status" value="1"/>
</dbReference>
<dbReference type="Gene3D" id="1.10.287.130">
    <property type="match status" value="1"/>
</dbReference>
<dbReference type="Gene3D" id="3.30.565.10">
    <property type="entry name" value="Histidine kinase-like ATPase, C-terminal domain"/>
    <property type="match status" value="1"/>
</dbReference>
<dbReference type="Gene3D" id="3.30.450.20">
    <property type="entry name" value="PAS domain"/>
    <property type="match status" value="1"/>
</dbReference>
<dbReference type="InterPro" id="IPR036890">
    <property type="entry name" value="HATPase_C_sf"/>
</dbReference>
<dbReference type="InterPro" id="IPR005467">
    <property type="entry name" value="His_kinase_dom"/>
</dbReference>
<dbReference type="InterPro" id="IPR003661">
    <property type="entry name" value="HisK_dim/P_dom"/>
</dbReference>
<dbReference type="InterPro" id="IPR036097">
    <property type="entry name" value="HisK_dim/P_sf"/>
</dbReference>
<dbReference type="InterPro" id="IPR000700">
    <property type="entry name" value="PAS-assoc_C"/>
</dbReference>
<dbReference type="InterPro" id="IPR050736">
    <property type="entry name" value="Sensor_HK_Regulatory"/>
</dbReference>
<dbReference type="InterPro" id="IPR004358">
    <property type="entry name" value="Sig_transdc_His_kin-like_C"/>
</dbReference>
<dbReference type="PANTHER" id="PTHR43711:SF31">
    <property type="entry name" value="HISTIDINE KINASE"/>
    <property type="match status" value="1"/>
</dbReference>
<dbReference type="PANTHER" id="PTHR43711">
    <property type="entry name" value="TWO-COMPONENT HISTIDINE KINASE"/>
    <property type="match status" value="1"/>
</dbReference>
<dbReference type="Pfam" id="PF02518">
    <property type="entry name" value="HATPase_c"/>
    <property type="match status" value="1"/>
</dbReference>
<dbReference type="Pfam" id="PF00512">
    <property type="entry name" value="HisKA"/>
    <property type="match status" value="1"/>
</dbReference>
<dbReference type="PRINTS" id="PR00344">
    <property type="entry name" value="BCTRLSENSOR"/>
</dbReference>
<dbReference type="SMART" id="SM00387">
    <property type="entry name" value="HATPase_c"/>
    <property type="match status" value="1"/>
</dbReference>
<dbReference type="SMART" id="SM00388">
    <property type="entry name" value="HisKA"/>
    <property type="match status" value="1"/>
</dbReference>
<dbReference type="SUPFAM" id="SSF55874">
    <property type="entry name" value="ATPase domain of HSP90 chaperone/DNA topoisomerase II/histidine kinase"/>
    <property type="match status" value="1"/>
</dbReference>
<dbReference type="SUPFAM" id="SSF47384">
    <property type="entry name" value="Homodimeric domain of signal transducing histidine kinase"/>
    <property type="match status" value="1"/>
</dbReference>
<dbReference type="PROSITE" id="PS50109">
    <property type="entry name" value="HIS_KIN"/>
    <property type="match status" value="1"/>
</dbReference>
<dbReference type="PROSITE" id="PS50113">
    <property type="entry name" value="PAC"/>
    <property type="match status" value="1"/>
</dbReference>
<organism>
    <name type="scientific">Rhizobium meliloti (strain 1021)</name>
    <name type="common">Ensifer meliloti</name>
    <name type="synonym">Sinorhizobium meliloti</name>
    <dbReference type="NCBI Taxonomy" id="266834"/>
    <lineage>
        <taxon>Bacteria</taxon>
        <taxon>Pseudomonadati</taxon>
        <taxon>Pseudomonadota</taxon>
        <taxon>Alphaproteobacteria</taxon>
        <taxon>Hyphomicrobiales</taxon>
        <taxon>Rhizobiaceae</taxon>
        <taxon>Sinorhizobium/Ensifer group</taxon>
        <taxon>Sinorhizobium</taxon>
    </lineage>
</organism>
<accession>Q52969</accession>
<comment type="catalytic activity">
    <reaction>
        <text>ATP + protein L-histidine = ADP + protein N-phospho-L-histidine.</text>
        <dbReference type="EC" id="2.7.13.3"/>
    </reaction>
</comment>
<comment type="subcellular location">
    <subcellularLocation>
        <location evidence="5">Cell membrane</location>
        <topology evidence="5">Multi-pass membrane protein</topology>
    </subcellularLocation>
</comment>
<sequence length="525" mass="55899">MAGRWTSLVDEAAAPWLPRGGLGSAIARHDFRRLRAVAAVSLTALPIVPLALTLALPVSAALPAGAALWASASLLAAAAAIAGGREFPTDGEVEFAPAPELPDLNAAYDLFAGLVTVHDTRGHVLSVHGRDASEYLKLMRDPHGRGFIEQIHVSDRIAFLRAIDSLRLDSERSAVDIRLERTSADGPQFAHIYCEMTPLRDAEGNLLAIVAQSRDVSEEARLQAEAAAKAAHAESANDAKTRFLAAVSHELRTPLNAILGFSDVLAGEYFGKLENDRQREYVSLIHQSGTHLLSVVNTMLDMSKIEAGRYELLLEPFRVAEAIAACEAMLSHQAREKGVRLTSRVTRSVGEINADQRAFQQILINLIGNAIKFTDRGGLVTVDAALEGNMLKLTVSDTGIGIAADKLQMLGQPFVQIQNDYTRRYEGTGLGLSLVKGLAELHGGDVSIRSAEGEGTVIVVTIPSDASGAAERQCADAPVTVEFPPRLKQHADGKREAGVPALSEALHTGEIGREGGHGAAQAKTA</sequence>
<protein>
    <recommendedName>
        <fullName>Uncharacterized sensor-like histidine kinase R01002</fullName>
        <ecNumber>2.7.13.3</ecNumber>
    </recommendedName>
</protein>
<reference key="1">
    <citation type="journal article" date="2001" name="Proc. Natl. Acad. Sci. U.S.A.">
        <title>Analysis of the chromosome sequence of the legume symbiont Sinorhizobium meliloti strain 1021.</title>
        <authorList>
            <person name="Capela D."/>
            <person name="Barloy-Hubler F."/>
            <person name="Gouzy J."/>
            <person name="Bothe G."/>
            <person name="Ampe F."/>
            <person name="Batut J."/>
            <person name="Boistard P."/>
            <person name="Becker A."/>
            <person name="Boutry M."/>
            <person name="Cadieu E."/>
            <person name="Dreano S."/>
            <person name="Gloux S."/>
            <person name="Godrie T."/>
            <person name="Goffeau A."/>
            <person name="Kahn D."/>
            <person name="Kiss E."/>
            <person name="Lelaure V."/>
            <person name="Masuy D."/>
            <person name="Pohl T."/>
            <person name="Portetelle D."/>
            <person name="Puehler A."/>
            <person name="Purnelle B."/>
            <person name="Ramsperger U."/>
            <person name="Renard C."/>
            <person name="Thebault P."/>
            <person name="Vandenbol M."/>
            <person name="Weidner S."/>
            <person name="Galibert F."/>
        </authorList>
    </citation>
    <scope>NUCLEOTIDE SEQUENCE [LARGE SCALE GENOMIC DNA]</scope>
    <source>
        <strain>1021</strain>
    </source>
</reference>
<reference key="2">
    <citation type="journal article" date="2001" name="Science">
        <title>The composite genome of the legume symbiont Sinorhizobium meliloti.</title>
        <authorList>
            <person name="Galibert F."/>
            <person name="Finan T.M."/>
            <person name="Long S.R."/>
            <person name="Puehler A."/>
            <person name="Abola P."/>
            <person name="Ampe F."/>
            <person name="Barloy-Hubler F."/>
            <person name="Barnett M.J."/>
            <person name="Becker A."/>
            <person name="Boistard P."/>
            <person name="Bothe G."/>
            <person name="Boutry M."/>
            <person name="Bowser L."/>
            <person name="Buhrmester J."/>
            <person name="Cadieu E."/>
            <person name="Capela D."/>
            <person name="Chain P."/>
            <person name="Cowie A."/>
            <person name="Davis R.W."/>
            <person name="Dreano S."/>
            <person name="Federspiel N.A."/>
            <person name="Fisher R.F."/>
            <person name="Gloux S."/>
            <person name="Godrie T."/>
            <person name="Goffeau A."/>
            <person name="Golding B."/>
            <person name="Gouzy J."/>
            <person name="Gurjal M."/>
            <person name="Hernandez-Lucas I."/>
            <person name="Hong A."/>
            <person name="Huizar L."/>
            <person name="Hyman R.W."/>
            <person name="Jones T."/>
            <person name="Kahn D."/>
            <person name="Kahn M.L."/>
            <person name="Kalman S."/>
            <person name="Keating D.H."/>
            <person name="Kiss E."/>
            <person name="Komp C."/>
            <person name="Lelaure V."/>
            <person name="Masuy D."/>
            <person name="Palm C."/>
            <person name="Peck M.C."/>
            <person name="Pohl T.M."/>
            <person name="Portetelle D."/>
            <person name="Purnelle B."/>
            <person name="Ramsperger U."/>
            <person name="Surzycki R."/>
            <person name="Thebault P."/>
            <person name="Vandenbol M."/>
            <person name="Vorhoelter F.J."/>
            <person name="Weidner S."/>
            <person name="Wells D.H."/>
            <person name="Wong K."/>
            <person name="Yeh K.-C."/>
            <person name="Batut J."/>
        </authorList>
    </citation>
    <scope>NUCLEOTIDE SEQUENCE [LARGE SCALE GENOMIC DNA]</scope>
    <source>
        <strain>1021</strain>
    </source>
</reference>
<reference key="3">
    <citation type="journal article" date="1995" name="Mol. Plant Microbe Interact.">
        <title>Molecular analysis of the Rhizobium meliloti mucR gene regulating the biosynthesis of the exopolysaccharides succinoglycan and galactoglucan.</title>
        <authorList>
            <person name="Keller M."/>
            <person name="Roxlau A."/>
            <person name="Weng W.M."/>
            <person name="Schmidt M."/>
            <person name="Quandt J."/>
            <person name="Niehaus K."/>
            <person name="Jording D."/>
            <person name="Arnold W."/>
            <person name="Puehler A."/>
        </authorList>
    </citation>
    <scope>NUCLEOTIDE SEQUENCE [GENOMIC DNA] OF 1-87</scope>
    <source>
        <strain>RCR2011 / SU47</strain>
    </source>
</reference>
<keyword id="KW-0067">ATP-binding</keyword>
<keyword id="KW-1003">Cell membrane</keyword>
<keyword id="KW-0418">Kinase</keyword>
<keyword id="KW-0472">Membrane</keyword>
<keyword id="KW-0547">Nucleotide-binding</keyword>
<keyword id="KW-0597">Phosphoprotein</keyword>
<keyword id="KW-1185">Reference proteome</keyword>
<keyword id="KW-0808">Transferase</keyword>
<keyword id="KW-0812">Transmembrane</keyword>
<keyword id="KW-1133">Transmembrane helix</keyword>
<keyword id="KW-0902">Two-component regulatory system</keyword>
<gene>
    <name type="ordered locus">R01002</name>
    <name type="ORF">SMc00059</name>
</gene>
<name>Y1002_RHIME</name>
<feature type="chain" id="PRO_0000074925" description="Uncharacterized sensor-like histidine kinase R01002">
    <location>
        <begin position="1"/>
        <end position="525"/>
    </location>
</feature>
<feature type="transmembrane region" description="Helical" evidence="1">
    <location>
        <begin position="36"/>
        <end position="56"/>
    </location>
</feature>
<feature type="transmembrane region" description="Helical" evidence="1">
    <location>
        <begin position="61"/>
        <end position="81"/>
    </location>
</feature>
<feature type="domain" description="PAC" evidence="3">
    <location>
        <begin position="173"/>
        <end position="228"/>
    </location>
</feature>
<feature type="domain" description="Histidine kinase" evidence="2">
    <location>
        <begin position="246"/>
        <end position="466"/>
    </location>
</feature>
<feature type="region of interest" description="Disordered" evidence="4">
    <location>
        <begin position="506"/>
        <end position="525"/>
    </location>
</feature>
<feature type="modified residue" description="Phosphohistidine; by autocatalysis" evidence="2">
    <location>
        <position position="249"/>
    </location>
</feature>